<protein>
    <recommendedName>
        <fullName evidence="8">Vesicular glutamate transporter 2.1</fullName>
    </recommendedName>
    <alternativeName>
        <fullName>Protein blumenkohl</fullName>
    </alternativeName>
    <alternativeName>
        <fullName>Solute carrier family 17 member 6-B</fullName>
    </alternativeName>
    <alternativeName>
        <fullName>Vesicular glutamate transporter 2-A</fullName>
    </alternativeName>
</protein>
<evidence type="ECO:0000250" key="1"/>
<evidence type="ECO:0000250" key="2">
    <source>
        <dbReference type="UniProtKB" id="Q8BLE7"/>
    </source>
</evidence>
<evidence type="ECO:0000250" key="3">
    <source>
        <dbReference type="UniProtKB" id="Q9JI12"/>
    </source>
</evidence>
<evidence type="ECO:0000255" key="4"/>
<evidence type="ECO:0000269" key="5">
    <source>
    </source>
</evidence>
<evidence type="ECO:0000269" key="6">
    <source>
    </source>
</evidence>
<evidence type="ECO:0000269" key="7">
    <source>
    </source>
</evidence>
<evidence type="ECO:0000305" key="8"/>
<proteinExistence type="evidence at transcript level"/>
<name>VGL2A_DANRE</name>
<organism>
    <name type="scientific">Danio rerio</name>
    <name type="common">Zebrafish</name>
    <name type="synonym">Brachydanio rerio</name>
    <dbReference type="NCBI Taxonomy" id="7955"/>
    <lineage>
        <taxon>Eukaryota</taxon>
        <taxon>Metazoa</taxon>
        <taxon>Chordata</taxon>
        <taxon>Craniata</taxon>
        <taxon>Vertebrata</taxon>
        <taxon>Euteleostomi</taxon>
        <taxon>Actinopterygii</taxon>
        <taxon>Neopterygii</taxon>
        <taxon>Teleostei</taxon>
        <taxon>Ostariophysi</taxon>
        <taxon>Cypriniformes</taxon>
        <taxon>Danionidae</taxon>
        <taxon>Danioninae</taxon>
        <taxon>Danio</taxon>
    </lineage>
</organism>
<accession>Q5W8I8</accession>
<accession>B3DGT1</accession>
<accession>Q8AW47</accession>
<reference key="1">
    <citation type="journal article" date="2004" name="J. Comp. Neurol.">
        <title>Distribution of prospective glutamatergic, glycinergic, and GABAergic neurons in embryonic and larval zebrafish.</title>
        <authorList>
            <person name="Higashijima S."/>
            <person name="Mandel G."/>
            <person name="Fetcho J.R."/>
        </authorList>
    </citation>
    <scope>NUCLEOTIDE SEQUENCE [MRNA]</scope>
    <scope>TISSUE SPECIFICITY</scope>
</reference>
<reference key="2">
    <citation type="journal article" date="2013" name="Nature">
        <title>The zebrafish reference genome sequence and its relationship to the human genome.</title>
        <authorList>
            <person name="Howe K."/>
            <person name="Clark M.D."/>
            <person name="Torroja C.F."/>
            <person name="Torrance J."/>
            <person name="Berthelot C."/>
            <person name="Muffato M."/>
            <person name="Collins J.E."/>
            <person name="Humphray S."/>
            <person name="McLaren K."/>
            <person name="Matthews L."/>
            <person name="McLaren S."/>
            <person name="Sealy I."/>
            <person name="Caccamo M."/>
            <person name="Churcher C."/>
            <person name="Scott C."/>
            <person name="Barrett J.C."/>
            <person name="Koch R."/>
            <person name="Rauch G.J."/>
            <person name="White S."/>
            <person name="Chow W."/>
            <person name="Kilian B."/>
            <person name="Quintais L.T."/>
            <person name="Guerra-Assuncao J.A."/>
            <person name="Zhou Y."/>
            <person name="Gu Y."/>
            <person name="Yen J."/>
            <person name="Vogel J.H."/>
            <person name="Eyre T."/>
            <person name="Redmond S."/>
            <person name="Banerjee R."/>
            <person name="Chi J."/>
            <person name="Fu B."/>
            <person name="Langley E."/>
            <person name="Maguire S.F."/>
            <person name="Laird G.K."/>
            <person name="Lloyd D."/>
            <person name="Kenyon E."/>
            <person name="Donaldson S."/>
            <person name="Sehra H."/>
            <person name="Almeida-King J."/>
            <person name="Loveland J."/>
            <person name="Trevanion S."/>
            <person name="Jones M."/>
            <person name="Quail M."/>
            <person name="Willey D."/>
            <person name="Hunt A."/>
            <person name="Burton J."/>
            <person name="Sims S."/>
            <person name="McLay K."/>
            <person name="Plumb B."/>
            <person name="Davis J."/>
            <person name="Clee C."/>
            <person name="Oliver K."/>
            <person name="Clark R."/>
            <person name="Riddle C."/>
            <person name="Elliot D."/>
            <person name="Threadgold G."/>
            <person name="Harden G."/>
            <person name="Ware D."/>
            <person name="Begum S."/>
            <person name="Mortimore B."/>
            <person name="Kerry G."/>
            <person name="Heath P."/>
            <person name="Phillimore B."/>
            <person name="Tracey A."/>
            <person name="Corby N."/>
            <person name="Dunn M."/>
            <person name="Johnson C."/>
            <person name="Wood J."/>
            <person name="Clark S."/>
            <person name="Pelan S."/>
            <person name="Griffiths G."/>
            <person name="Smith M."/>
            <person name="Glithero R."/>
            <person name="Howden P."/>
            <person name="Barker N."/>
            <person name="Lloyd C."/>
            <person name="Stevens C."/>
            <person name="Harley J."/>
            <person name="Holt K."/>
            <person name="Panagiotidis G."/>
            <person name="Lovell J."/>
            <person name="Beasley H."/>
            <person name="Henderson C."/>
            <person name="Gordon D."/>
            <person name="Auger K."/>
            <person name="Wright D."/>
            <person name="Collins J."/>
            <person name="Raisen C."/>
            <person name="Dyer L."/>
            <person name="Leung K."/>
            <person name="Robertson L."/>
            <person name="Ambridge K."/>
            <person name="Leongamornlert D."/>
            <person name="McGuire S."/>
            <person name="Gilderthorp R."/>
            <person name="Griffiths C."/>
            <person name="Manthravadi D."/>
            <person name="Nichol S."/>
            <person name="Barker G."/>
            <person name="Whitehead S."/>
            <person name="Kay M."/>
            <person name="Brown J."/>
            <person name="Murnane C."/>
            <person name="Gray E."/>
            <person name="Humphries M."/>
            <person name="Sycamore N."/>
            <person name="Barker D."/>
            <person name="Saunders D."/>
            <person name="Wallis J."/>
            <person name="Babbage A."/>
            <person name="Hammond S."/>
            <person name="Mashreghi-Mohammadi M."/>
            <person name="Barr L."/>
            <person name="Martin S."/>
            <person name="Wray P."/>
            <person name="Ellington A."/>
            <person name="Matthews N."/>
            <person name="Ellwood M."/>
            <person name="Woodmansey R."/>
            <person name="Clark G."/>
            <person name="Cooper J."/>
            <person name="Tromans A."/>
            <person name="Grafham D."/>
            <person name="Skuce C."/>
            <person name="Pandian R."/>
            <person name="Andrews R."/>
            <person name="Harrison E."/>
            <person name="Kimberley A."/>
            <person name="Garnett J."/>
            <person name="Fosker N."/>
            <person name="Hall R."/>
            <person name="Garner P."/>
            <person name="Kelly D."/>
            <person name="Bird C."/>
            <person name="Palmer S."/>
            <person name="Gehring I."/>
            <person name="Berger A."/>
            <person name="Dooley C.M."/>
            <person name="Ersan-Urun Z."/>
            <person name="Eser C."/>
            <person name="Geiger H."/>
            <person name="Geisler M."/>
            <person name="Karotki L."/>
            <person name="Kirn A."/>
            <person name="Konantz J."/>
            <person name="Konantz M."/>
            <person name="Oberlander M."/>
            <person name="Rudolph-Geiger S."/>
            <person name="Teucke M."/>
            <person name="Lanz C."/>
            <person name="Raddatz G."/>
            <person name="Osoegawa K."/>
            <person name="Zhu B."/>
            <person name="Rapp A."/>
            <person name="Widaa S."/>
            <person name="Langford C."/>
            <person name="Yang F."/>
            <person name="Schuster S.C."/>
            <person name="Carter N.P."/>
            <person name="Harrow J."/>
            <person name="Ning Z."/>
            <person name="Herrero J."/>
            <person name="Searle S.M."/>
            <person name="Enright A."/>
            <person name="Geisler R."/>
            <person name="Plasterk R.H."/>
            <person name="Lee C."/>
            <person name="Westerfield M."/>
            <person name="de Jong P.J."/>
            <person name="Zon L.I."/>
            <person name="Postlethwait J.H."/>
            <person name="Nusslein-Volhard C."/>
            <person name="Hubbard T.J."/>
            <person name="Roest Crollius H."/>
            <person name="Rogers J."/>
            <person name="Stemple D.L."/>
        </authorList>
    </citation>
    <scope>NUCLEOTIDE SEQUENCE [LARGE SCALE GENOMIC DNA]</scope>
    <source>
        <strain>Tuebingen</strain>
    </source>
</reference>
<reference key="3">
    <citation type="submission" date="2008-04" db="EMBL/GenBank/DDBJ databases">
        <authorList>
            <consortium name="NIH - Zebrafish Gene Collection (ZGC) project"/>
        </authorList>
    </citation>
    <scope>NUCLEOTIDE SEQUENCE [LARGE SCALE MRNA]</scope>
</reference>
<reference key="4">
    <citation type="journal article" date="2007" name="Neuron">
        <title>Vesicular glutamate transport at a central synapse limits the acuity of visual perception in zebrafish.</title>
        <authorList>
            <person name="Smear M.C."/>
            <person name="Tao H.W."/>
            <person name="Staub W."/>
            <person name="Orger M.B."/>
            <person name="Gosse N.J."/>
            <person name="Liu Y."/>
            <person name="Takahashi K."/>
            <person name="Poo M.-M."/>
            <person name="Baier H."/>
        </authorList>
    </citation>
    <scope>FUNCTION</scope>
    <scope>TISSUE SPECIFICITY</scope>
</reference>
<reference key="5">
    <citation type="journal article" date="2007" name="PLoS Biol.">
        <title>Characterization of sleep in zebrafish and insomnia in hypocretin receptor mutants.</title>
        <authorList>
            <person name="Yokogawa T."/>
            <person name="Marin W."/>
            <person name="Faraco J."/>
            <person name="Pezeron G."/>
            <person name="Appelbaum L."/>
            <person name="Zhang J."/>
            <person name="Rosa F."/>
            <person name="Mourrain P."/>
            <person name="Mignot E."/>
        </authorList>
    </citation>
    <scope>TISSUE SPECIFICITY</scope>
</reference>
<keyword id="KW-0050">Antiport</keyword>
<keyword id="KW-1003">Cell membrane</keyword>
<keyword id="KW-0868">Chloride</keyword>
<keyword id="KW-0869">Chloride channel</keyword>
<keyword id="KW-0968">Cytoplasmic vesicle</keyword>
<keyword id="KW-0325">Glycoprotein</keyword>
<keyword id="KW-0407">Ion channel</keyword>
<keyword id="KW-0406">Ion transport</keyword>
<keyword id="KW-0472">Membrane</keyword>
<keyword id="KW-0532">Neurotransmitter transport</keyword>
<keyword id="KW-0592">Phosphate transport</keyword>
<keyword id="KW-1185">Reference proteome</keyword>
<keyword id="KW-0716">Sensory transduction</keyword>
<keyword id="KW-0915">Sodium</keyword>
<keyword id="KW-0739">Sodium transport</keyword>
<keyword id="KW-0769">Symport</keyword>
<keyword id="KW-0770">Synapse</keyword>
<keyword id="KW-0771">Synaptosome</keyword>
<keyword id="KW-0812">Transmembrane</keyword>
<keyword id="KW-1133">Transmembrane helix</keyword>
<keyword id="KW-0813">Transport</keyword>
<keyword id="KW-0844">Vision</keyword>
<sequence>METPREPAGFSKEGLKQLAGKTLGHVYRVIEKRQKPGENIELTEDGRPAQINERKAPLCDCTCFGLPRRYIIAIMSGLGFCISFGIRCNLGVAIVSMVNNSTIHLNGKIIIKEKAKFNWDPETVGLIHGSFFWGYIVTQIPGGYISSRLAANRVFGAAILLTSTLNMFIPSAARGHYGCVIFVRILQGLVEGVTYPACHGIWSKWAPPLERSRLATTSFCGSYAGAVIAMPLAGILVQYTGWSSVFYVYGCFGIFWYMFWILVSYESPAEHPTITAEERCYIEESIGESAKLLGPADKFKTPWRKFFTSMPVYAIIVANFCRSWTFYLLLISQPAYFEEVFGFEISKVGMLSALPHLVMTIIVPIGGQLADHLRSKNILSTTTVRKIMNCGGFGMEATLLLIVGYSHSKGVAISFLVLAVGFSGFAISGFNVNHLDIAPRYASILMGISNGVGTLSGMVCPLIVGAMTKHKTREEWQYVFLIASLVHYGGVIFYGIFASGEKQPWADPELTSDEKCGFIDEDELAEETGDITQSYGALGAPAKSYGATTQLNGGWAEGWDKREEYVQDGVEEGGYGYRQGGNYS</sequence>
<dbReference type="EMBL" id="AB183386">
    <property type="protein sequence ID" value="BAD67437.1"/>
    <property type="molecule type" value="mRNA"/>
</dbReference>
<dbReference type="EMBL" id="AL627170">
    <property type="protein sequence ID" value="CAD52142.1"/>
    <property type="molecule type" value="Genomic_DNA"/>
</dbReference>
<dbReference type="EMBL" id="BC162508">
    <property type="protein sequence ID" value="AAI62508.1"/>
    <property type="molecule type" value="mRNA"/>
</dbReference>
<dbReference type="RefSeq" id="NP_001122293.1">
    <property type="nucleotide sequence ID" value="NM_001128821.1"/>
</dbReference>
<dbReference type="SMR" id="Q5W8I8"/>
<dbReference type="FunCoup" id="Q5W8I8">
    <property type="interactions" value="281"/>
</dbReference>
<dbReference type="STRING" id="7955.ENSDARP00000090645"/>
<dbReference type="GlyCosmos" id="Q5W8I8">
    <property type="glycosylation" value="2 sites, No reported glycans"/>
</dbReference>
<dbReference type="PaxDb" id="7955-ENSDARP00000090645"/>
<dbReference type="Ensembl" id="ENSDART00000099872">
    <property type="protein sequence ID" value="ENSDARP00000090645"/>
    <property type="gene ID" value="ENSDARG00000041150"/>
</dbReference>
<dbReference type="GeneID" id="100149756"/>
<dbReference type="KEGG" id="dre:100149756"/>
<dbReference type="AGR" id="ZFIN:ZDB-GENE-030616-554"/>
<dbReference type="CTD" id="100149756"/>
<dbReference type="ZFIN" id="ZDB-GENE-030616-554">
    <property type="gene designation" value="slc17a6b"/>
</dbReference>
<dbReference type="eggNOG" id="KOG2532">
    <property type="taxonomic scope" value="Eukaryota"/>
</dbReference>
<dbReference type="HOGENOM" id="CLU_001265_5_0_1"/>
<dbReference type="InParanoid" id="Q5W8I8"/>
<dbReference type="OMA" id="YNEQSQM"/>
<dbReference type="OrthoDB" id="2985014at2759"/>
<dbReference type="PhylomeDB" id="Q5W8I8"/>
<dbReference type="TreeFam" id="TF313535"/>
<dbReference type="Reactome" id="R-DRE-428643">
    <property type="pathway name" value="Organic anion transporters"/>
</dbReference>
<dbReference type="PRO" id="PR:Q5W8I8"/>
<dbReference type="Proteomes" id="UP000000437">
    <property type="component" value="Chromosome 7"/>
</dbReference>
<dbReference type="Bgee" id="ENSDARG00000041150">
    <property type="expression patterns" value="Expressed in habenula and 25 other cell types or tissues"/>
</dbReference>
<dbReference type="ExpressionAtlas" id="Q5W8I8">
    <property type="expression patterns" value="differential"/>
</dbReference>
<dbReference type="GO" id="GO:0034707">
    <property type="term" value="C:chloride channel complex"/>
    <property type="evidence" value="ECO:0007669"/>
    <property type="project" value="UniProtKB-KW"/>
</dbReference>
<dbReference type="GO" id="GO:0060076">
    <property type="term" value="C:excitatory synapse"/>
    <property type="evidence" value="ECO:0000318"/>
    <property type="project" value="GO_Central"/>
</dbReference>
<dbReference type="GO" id="GO:0043005">
    <property type="term" value="C:neuron projection"/>
    <property type="evidence" value="ECO:0000250"/>
    <property type="project" value="UniProtKB"/>
</dbReference>
<dbReference type="GO" id="GO:0005886">
    <property type="term" value="C:plasma membrane"/>
    <property type="evidence" value="ECO:0007669"/>
    <property type="project" value="UniProtKB-SubCell"/>
</dbReference>
<dbReference type="GO" id="GO:0008021">
    <property type="term" value="C:synaptic vesicle"/>
    <property type="evidence" value="ECO:0000250"/>
    <property type="project" value="UniProtKB"/>
</dbReference>
<dbReference type="GO" id="GO:0030672">
    <property type="term" value="C:synaptic vesicle membrane"/>
    <property type="evidence" value="ECO:0000250"/>
    <property type="project" value="UniProtKB"/>
</dbReference>
<dbReference type="GO" id="GO:0005254">
    <property type="term" value="F:chloride channel activity"/>
    <property type="evidence" value="ECO:0000250"/>
    <property type="project" value="UniProtKB"/>
</dbReference>
<dbReference type="GO" id="GO:0005313">
    <property type="term" value="F:L-glutamate transmembrane transporter activity"/>
    <property type="evidence" value="ECO:0000318"/>
    <property type="project" value="GO_Central"/>
</dbReference>
<dbReference type="GO" id="GO:0140788">
    <property type="term" value="F:L-glutamate uniporter activity"/>
    <property type="evidence" value="ECO:0000250"/>
    <property type="project" value="UniProtKB"/>
</dbReference>
<dbReference type="GO" id="GO:0005326">
    <property type="term" value="F:neurotransmitter transmembrane transporter activity"/>
    <property type="evidence" value="ECO:0000318"/>
    <property type="project" value="GO_Central"/>
</dbReference>
<dbReference type="GO" id="GO:0015386">
    <property type="term" value="F:potassium:proton antiporter activity"/>
    <property type="evidence" value="ECO:0000250"/>
    <property type="project" value="UniProtKB"/>
</dbReference>
<dbReference type="GO" id="GO:0005436">
    <property type="term" value="F:sodium:phosphate symporter activity"/>
    <property type="evidence" value="ECO:0000250"/>
    <property type="project" value="UniProtKB"/>
</dbReference>
<dbReference type="GO" id="GO:0007268">
    <property type="term" value="P:chemical synaptic transmission"/>
    <property type="evidence" value="ECO:0000315"/>
    <property type="project" value="ZFIN"/>
</dbReference>
<dbReference type="GO" id="GO:0051938">
    <property type="term" value="P:L-glutamate import"/>
    <property type="evidence" value="ECO:0000250"/>
    <property type="project" value="UniProtKB"/>
</dbReference>
<dbReference type="GO" id="GO:0015813">
    <property type="term" value="P:L-glutamate transmembrane transport"/>
    <property type="evidence" value="ECO:0000250"/>
    <property type="project" value="UniProtKB"/>
</dbReference>
<dbReference type="GO" id="GO:0098700">
    <property type="term" value="P:neurotransmitter loading into synaptic vesicle"/>
    <property type="evidence" value="ECO:0000318"/>
    <property type="project" value="GO_Central"/>
</dbReference>
<dbReference type="GO" id="GO:0055062">
    <property type="term" value="P:phosphate ion homeostasis"/>
    <property type="evidence" value="ECO:0000250"/>
    <property type="project" value="UniProtKB"/>
</dbReference>
<dbReference type="GO" id="GO:0006817">
    <property type="term" value="P:phosphate ion transport"/>
    <property type="evidence" value="ECO:0000250"/>
    <property type="project" value="UniProtKB"/>
</dbReference>
<dbReference type="GO" id="GO:0050803">
    <property type="term" value="P:regulation of synapse structure or activity"/>
    <property type="evidence" value="ECO:0000318"/>
    <property type="project" value="GO_Central"/>
</dbReference>
<dbReference type="GO" id="GO:0044341">
    <property type="term" value="P:sodium-dependent phosphate transport"/>
    <property type="evidence" value="ECO:0000250"/>
    <property type="project" value="UniProtKB"/>
</dbReference>
<dbReference type="GO" id="GO:0035249">
    <property type="term" value="P:synaptic transmission, glutamatergic"/>
    <property type="evidence" value="ECO:0000318"/>
    <property type="project" value="GO_Central"/>
</dbReference>
<dbReference type="GO" id="GO:0007601">
    <property type="term" value="P:visual perception"/>
    <property type="evidence" value="ECO:0000315"/>
    <property type="project" value="CACAO"/>
</dbReference>
<dbReference type="CDD" id="cd17382">
    <property type="entry name" value="MFS_SLC17A6_7_8_VGluT"/>
    <property type="match status" value="1"/>
</dbReference>
<dbReference type="FunFam" id="1.20.1250.20:FF:000004">
    <property type="entry name" value="vesicular glutamate transporter 2 isoform X1"/>
    <property type="match status" value="1"/>
</dbReference>
<dbReference type="FunFam" id="1.20.1250.20:FF:000005">
    <property type="entry name" value="vesicular glutamate transporter 2 isoform X1"/>
    <property type="match status" value="1"/>
</dbReference>
<dbReference type="Gene3D" id="1.20.1250.20">
    <property type="entry name" value="MFS general substrate transporter like domains"/>
    <property type="match status" value="2"/>
</dbReference>
<dbReference type="InterPro" id="IPR011701">
    <property type="entry name" value="MFS"/>
</dbReference>
<dbReference type="InterPro" id="IPR020846">
    <property type="entry name" value="MFS_dom"/>
</dbReference>
<dbReference type="InterPro" id="IPR050382">
    <property type="entry name" value="MFS_Na/Anion_cotransporter"/>
</dbReference>
<dbReference type="InterPro" id="IPR036259">
    <property type="entry name" value="MFS_trans_sf"/>
</dbReference>
<dbReference type="PANTHER" id="PTHR11662">
    <property type="entry name" value="SOLUTE CARRIER FAMILY 17"/>
    <property type="match status" value="1"/>
</dbReference>
<dbReference type="PANTHER" id="PTHR11662:SF201">
    <property type="entry name" value="VESICULAR GLUTAMATE TRANSPORTER 2"/>
    <property type="match status" value="1"/>
</dbReference>
<dbReference type="Pfam" id="PF07690">
    <property type="entry name" value="MFS_1"/>
    <property type="match status" value="1"/>
</dbReference>
<dbReference type="SUPFAM" id="SSF103473">
    <property type="entry name" value="MFS general substrate transporter"/>
    <property type="match status" value="1"/>
</dbReference>
<dbReference type="PROSITE" id="PS50850">
    <property type="entry name" value="MFS"/>
    <property type="match status" value="1"/>
</dbReference>
<feature type="chain" id="PRO_0000318172" description="Vesicular glutamate transporter 2.1">
    <location>
        <begin position="1"/>
        <end position="584"/>
    </location>
</feature>
<feature type="topological domain" description="Cytoplasmic" evidence="4">
    <location>
        <begin position="1"/>
        <end position="70"/>
    </location>
</feature>
<feature type="transmembrane region" description="Helical" evidence="4">
    <location>
        <begin position="71"/>
        <end position="91"/>
    </location>
</feature>
<feature type="topological domain" description="Vesicular" evidence="4">
    <location>
        <begin position="92"/>
        <end position="124"/>
    </location>
</feature>
<feature type="transmembrane region" description="Helical" evidence="4">
    <location>
        <begin position="125"/>
        <end position="145"/>
    </location>
</feature>
<feature type="topological domain" description="Cytoplasmic" evidence="4">
    <location>
        <begin position="146"/>
        <end position="148"/>
    </location>
</feature>
<feature type="transmembrane region" description="Helical" evidence="4">
    <location>
        <begin position="149"/>
        <end position="169"/>
    </location>
</feature>
<feature type="topological domain" description="Vesicular" evidence="4">
    <location>
        <begin position="170"/>
        <end position="177"/>
    </location>
</feature>
<feature type="transmembrane region" description="Helical" evidence="4">
    <location>
        <begin position="178"/>
        <end position="198"/>
    </location>
</feature>
<feature type="topological domain" description="Cytoplasmic" evidence="4">
    <location>
        <begin position="199"/>
        <end position="216"/>
    </location>
</feature>
<feature type="transmembrane region" description="Helical" evidence="4">
    <location>
        <begin position="217"/>
        <end position="237"/>
    </location>
</feature>
<feature type="topological domain" description="Vesicular" evidence="4">
    <location>
        <begin position="238"/>
        <end position="244"/>
    </location>
</feature>
<feature type="transmembrane region" description="Helical" evidence="4">
    <location>
        <begin position="245"/>
        <end position="265"/>
    </location>
</feature>
<feature type="topological domain" description="Cytoplasmic" evidence="4">
    <location>
        <begin position="266"/>
        <end position="310"/>
    </location>
</feature>
<feature type="transmembrane region" description="Helical" evidence="4">
    <location>
        <begin position="311"/>
        <end position="331"/>
    </location>
</feature>
<feature type="topological domain" description="Vesicular" evidence="4">
    <location>
        <begin position="332"/>
        <end position="349"/>
    </location>
</feature>
<feature type="transmembrane region" description="Helical" evidence="4">
    <location>
        <begin position="350"/>
        <end position="370"/>
    </location>
</feature>
<feature type="topological domain" description="Cytoplasmic" evidence="4">
    <location>
        <begin position="371"/>
        <end position="386"/>
    </location>
</feature>
<feature type="transmembrane region" description="Helical" evidence="4">
    <location>
        <begin position="387"/>
        <end position="407"/>
    </location>
</feature>
<feature type="topological domain" description="Vesicular" evidence="4">
    <location>
        <begin position="408"/>
        <end position="409"/>
    </location>
</feature>
<feature type="transmembrane region" description="Helical" evidence="4">
    <location>
        <begin position="410"/>
        <end position="430"/>
    </location>
</feature>
<feature type="topological domain" description="Cytoplasmic" evidence="4">
    <location>
        <begin position="431"/>
        <end position="445"/>
    </location>
</feature>
<feature type="transmembrane region" description="Helical" evidence="4">
    <location>
        <begin position="446"/>
        <end position="466"/>
    </location>
</feature>
<feature type="topological domain" description="Vesicular" evidence="4">
    <location>
        <begin position="467"/>
        <end position="477"/>
    </location>
</feature>
<feature type="transmembrane region" description="Helical" evidence="4">
    <location>
        <begin position="478"/>
        <end position="498"/>
    </location>
</feature>
<feature type="topological domain" description="Cytoplasmic" evidence="4">
    <location>
        <begin position="499"/>
        <end position="584"/>
    </location>
</feature>
<feature type="glycosylation site" description="N-linked (GlcNAc...) asparagine" evidence="4">
    <location>
        <position position="99"/>
    </location>
</feature>
<feature type="glycosylation site" description="N-linked (GlcNAc...) asparagine" evidence="4">
    <location>
        <position position="100"/>
    </location>
</feature>
<feature type="sequence conflict" description="In Ref. 1; BAD67437." evidence="8" ref="1">
    <original>K</original>
    <variation>R</variation>
    <location>
        <position position="55"/>
    </location>
</feature>
<feature type="sequence conflict" description="In Ref. 1; BAD67437." evidence="8" ref="1">
    <original>L</original>
    <variation>S</variation>
    <location>
        <position position="58"/>
    </location>
</feature>
<feature type="sequence conflict" description="In Ref. 1; BAD67437." evidence="8" ref="1">
    <original>L</original>
    <variation>H</variation>
    <location>
        <position position="445"/>
    </location>
</feature>
<gene>
    <name type="primary">slc17a6b</name>
    <name type="synonym">blu</name>
    <name type="synonym">slc17a6</name>
    <name type="synonym">vglut2.1</name>
    <name type="synonym">vglut2a</name>
</gene>
<comment type="function">
    <text evidence="2 3 6">Multifunctional transporter that transports L-glutamate as well as multiple ions such as chloride, proton, potassium, sodium and phosphate. At the synaptic vesicle membrane, mainly functions as a uniporter which transports preferentially L-glutamate but also, phosphate from the cytoplasm into synaptic vesicles at presynaptic nerve terminals of excitatory neural cells. The L-glutamate or phosphate uniporter activity is electrogenic and is driven by the proton electrochemical gradient, mainly by the electrical gradient established by the vacuolar H(+)-ATPase across the synaptic vesicle membrane. In addition, functions as a chloride channel that allows a chloride permeation through the synaptic vesicle membrane therefore affects the proton electrochemical gradient and promotes synaptic vesicles acidification. Moreover, functions as a vesicular K(+)/H(+) antiport allowing to maintain the electrical gradient and to decrease chemical gradient and therefore sustain vesicular L-glutamate uptake. The vesicular H(+)/H(+) antiport activity is electroneutral. At the plasma membrane, following exocytosis, functions as a symporter of Na(+) and phosphate from the extracellular space to the cytoplasm allowing synaptic phosphate homeostasis regulation. The symporter activity is driven by an inside negative membrane potential and is electrogenic (By similarity). Also involved in the regulation of retinal hyaloid vessel regression during postnatal development (By similarity). May also play a role in the endocrine L-glutamatergic system of other tissues such as pineal gland and pancreas (By similarity). Required for glutamate release by retinotectal synapses and visual acuity (PubMed:17196531).</text>
</comment>
<comment type="catalytic activity">
    <reaction evidence="3">
        <text>L-glutamate(out) = L-glutamate(in)</text>
        <dbReference type="Rhea" id="RHEA:66336"/>
        <dbReference type="ChEBI" id="CHEBI:29985"/>
    </reaction>
</comment>
<comment type="catalytic activity">
    <reaction evidence="3">
        <text>3 Na(+)(out) + phosphate(out) = 3 Na(+)(in) + phosphate(in)</text>
        <dbReference type="Rhea" id="RHEA:71255"/>
        <dbReference type="ChEBI" id="CHEBI:29101"/>
        <dbReference type="ChEBI" id="CHEBI:43474"/>
    </reaction>
</comment>
<comment type="catalytic activity">
    <reaction evidence="3">
        <text>phosphate(in) = phosphate(out)</text>
        <dbReference type="Rhea" id="RHEA:32823"/>
        <dbReference type="ChEBI" id="CHEBI:43474"/>
    </reaction>
</comment>
<comment type="catalytic activity">
    <reaction evidence="3">
        <text>K(+)(in) + H(+)(out) = K(+)(out) + H(+)(in)</text>
        <dbReference type="Rhea" id="RHEA:29467"/>
        <dbReference type="ChEBI" id="CHEBI:15378"/>
        <dbReference type="ChEBI" id="CHEBI:29103"/>
    </reaction>
</comment>
<comment type="catalytic activity">
    <reaction evidence="3">
        <text>chloride(in) = chloride(out)</text>
        <dbReference type="Rhea" id="RHEA:29823"/>
        <dbReference type="ChEBI" id="CHEBI:17996"/>
    </reaction>
</comment>
<comment type="activity regulation">
    <text evidence="3">Chloride channel activity is allosterically activated by lumenal H(+) and Cl(-) leading to synaptic vesicles acidification. The L-glutamate transport activity is allosterically activated by lumenal H(+) and Cl(-). The allosteric requirement for H(+) efficiently prevents non-vesicular efflux across the plasma membrane. The L-glutamate uniporter activity exhibits a biphasic dependence on chloride concentration.</text>
</comment>
<comment type="subcellular location">
    <subcellularLocation>
        <location evidence="1">Cytoplasmic vesicle</location>
        <location evidence="1">Secretory vesicle</location>
        <location evidence="1">Synaptic vesicle membrane</location>
    </subcellularLocation>
    <subcellularLocation>
        <location evidence="8">Membrane</location>
        <topology evidence="8">Multi-pass membrane protein</topology>
    </subcellularLocation>
    <subcellularLocation>
        <location evidence="1">Synapse</location>
        <location evidence="1">Synaptosome</location>
    </subcellularLocation>
    <subcellularLocation>
        <location evidence="2">Cell membrane</location>
        <topology evidence="4">Multi-pass membrane protein</topology>
    </subcellularLocation>
</comment>
<comment type="tissue specificity">
    <text evidence="5 6 7">Expressed in spinal cord and retinal ganglion cells.</text>
</comment>
<comment type="similarity">
    <text evidence="8">Belongs to the major facilitator superfamily. Sodium/anion cotransporter family. VGLUT subfamily.</text>
</comment>